<sequence>MSAANADFELFRVFLEKTCGIVLGSNKQYLVSSRLNKLMEQQGIKSLGELVQRIQTQRGGLREMVVDAMTTNETLWFRDTYPFEVLKQRVLPELIKANGGQRLRIWSAACSSGQEPYSLSMAIDEFEKTNLGQLKAGVQIVATDLSGSMLTAAKAGEYDTLAMGRGLSPERLQRYFDAKGPGRWAVKPAIRSRVEFRALNLLDSYASLGKFDMVFCRNVLIYFSAEVKRDILLRIHGTLKPGGYLFLGASEALNNLPDHYQMVQCSPGIIYRAK</sequence>
<reference key="1">
    <citation type="submission" date="1998-04" db="EMBL/GenBank/DDBJ databases">
        <title>Cloning, sequence and characterization of chemotaxis genes in Pseudomonas aeruginosa.</title>
        <authorList>
            <person name="Kato J."/>
            <person name="Nakamura T."/>
            <person name="Kuroda A."/>
            <person name="Ohtake H."/>
        </authorList>
    </citation>
    <scope>NUCLEOTIDE SEQUENCE [GENOMIC DNA]</scope>
    <source>
        <strain>ATCC 15692 / DSM 22644 / CIP 104116 / JCM 14847 / LMG 12228 / 1C / PRS 101 / PAO1</strain>
    </source>
</reference>
<reference key="2">
    <citation type="journal article" date="2000" name="Nature">
        <title>Complete genome sequence of Pseudomonas aeruginosa PAO1, an opportunistic pathogen.</title>
        <authorList>
            <person name="Stover C.K."/>
            <person name="Pham X.-Q.T."/>
            <person name="Erwin A.L."/>
            <person name="Mizoguchi S.D."/>
            <person name="Warrener P."/>
            <person name="Hickey M.J."/>
            <person name="Brinkman F.S.L."/>
            <person name="Hufnagle W.O."/>
            <person name="Kowalik D.J."/>
            <person name="Lagrou M."/>
            <person name="Garber R.L."/>
            <person name="Goltry L."/>
            <person name="Tolentino E."/>
            <person name="Westbrock-Wadman S."/>
            <person name="Yuan Y."/>
            <person name="Brody L.L."/>
            <person name="Coulter S.N."/>
            <person name="Folger K.R."/>
            <person name="Kas A."/>
            <person name="Larbig K."/>
            <person name="Lim R.M."/>
            <person name="Smith K.A."/>
            <person name="Spencer D.H."/>
            <person name="Wong G.K.-S."/>
            <person name="Wu Z."/>
            <person name="Paulsen I.T."/>
            <person name="Reizer J."/>
            <person name="Saier M.H. Jr."/>
            <person name="Hancock R.E.W."/>
            <person name="Lory S."/>
            <person name="Olson M.V."/>
        </authorList>
    </citation>
    <scope>NUCLEOTIDE SEQUENCE [LARGE SCALE GENOMIC DNA]</scope>
    <source>
        <strain>ATCC 15692 / DSM 22644 / CIP 104116 / JCM 14847 / LMG 12228 / 1C / PRS 101 / PAO1</strain>
    </source>
</reference>
<dbReference type="EC" id="2.1.1.80"/>
<dbReference type="EMBL" id="AB012768">
    <property type="protein sequence ID" value="BAA33556.1"/>
    <property type="molecule type" value="Genomic_DNA"/>
</dbReference>
<dbReference type="EMBL" id="AE004091">
    <property type="protein sequence ID" value="AAG06736.1"/>
    <property type="molecule type" value="Genomic_DNA"/>
</dbReference>
<dbReference type="PIR" id="A83227">
    <property type="entry name" value="A83227"/>
</dbReference>
<dbReference type="RefSeq" id="NP_252038.1">
    <property type="nucleotide sequence ID" value="NC_002516.2"/>
</dbReference>
<dbReference type="PDB" id="5XLX">
    <property type="method" value="X-ray"/>
    <property type="resolution" value="1.97 A"/>
    <property type="chains" value="A/B/C/D=1-274"/>
</dbReference>
<dbReference type="PDB" id="5XLY">
    <property type="method" value="X-ray"/>
    <property type="resolution" value="1.76 A"/>
    <property type="chains" value="A=1-274"/>
</dbReference>
<dbReference type="PDB" id="5Y4R">
    <property type="method" value="X-ray"/>
    <property type="resolution" value="2.30 A"/>
    <property type="chains" value="A/B=2-274"/>
</dbReference>
<dbReference type="PDB" id="5Y4S">
    <property type="method" value="X-ray"/>
    <property type="resolution" value="3.40 A"/>
    <property type="chains" value="A/B/C/D/E/F/G/H/I/J=2-274"/>
</dbReference>
<dbReference type="PDBsum" id="5XLX"/>
<dbReference type="PDBsum" id="5XLY"/>
<dbReference type="PDBsum" id="5Y4R"/>
<dbReference type="PDBsum" id="5Y4S"/>
<dbReference type="SMR" id="O87131"/>
<dbReference type="STRING" id="208964.PA3348"/>
<dbReference type="PaxDb" id="208964-PA3348"/>
<dbReference type="DNASU" id="882515"/>
<dbReference type="GeneID" id="882515"/>
<dbReference type="KEGG" id="pae:PA3348"/>
<dbReference type="PATRIC" id="fig|208964.12.peg.3507"/>
<dbReference type="PseudoCAP" id="PA3348"/>
<dbReference type="HOGENOM" id="CLU_025854_0_2_6"/>
<dbReference type="InParanoid" id="O87131"/>
<dbReference type="OrthoDB" id="9816309at2"/>
<dbReference type="PhylomeDB" id="O87131"/>
<dbReference type="BioCyc" id="PAER208964:G1FZ6-3412-MONOMER"/>
<dbReference type="PHI-base" id="PHI:9031"/>
<dbReference type="Proteomes" id="UP000002438">
    <property type="component" value="Chromosome"/>
</dbReference>
<dbReference type="GO" id="GO:0008276">
    <property type="term" value="F:protein methyltransferase activity"/>
    <property type="evidence" value="ECO:0000318"/>
    <property type="project" value="GO_Central"/>
</dbReference>
<dbReference type="GO" id="GO:0008983">
    <property type="term" value="F:protein-glutamate O-methyltransferase activity"/>
    <property type="evidence" value="ECO:0007669"/>
    <property type="project" value="UniProtKB-EC"/>
</dbReference>
<dbReference type="GO" id="GO:0032259">
    <property type="term" value="P:methylation"/>
    <property type="evidence" value="ECO:0007669"/>
    <property type="project" value="UniProtKB-KW"/>
</dbReference>
<dbReference type="CDD" id="cd02440">
    <property type="entry name" value="AdoMet_MTases"/>
    <property type="match status" value="1"/>
</dbReference>
<dbReference type="Gene3D" id="1.10.155.10">
    <property type="entry name" value="Chemotaxis receptor methyltransferase CheR, N-terminal domain"/>
    <property type="match status" value="1"/>
</dbReference>
<dbReference type="Gene3D" id="3.40.50.150">
    <property type="entry name" value="Vaccinia Virus protein VP39"/>
    <property type="match status" value="1"/>
</dbReference>
<dbReference type="InterPro" id="IPR050903">
    <property type="entry name" value="Bact_Chemotaxis_MeTrfase"/>
</dbReference>
<dbReference type="InterPro" id="IPR026024">
    <property type="entry name" value="Chemotaxis_MeTrfase_CheR"/>
</dbReference>
<dbReference type="InterPro" id="IPR022642">
    <property type="entry name" value="CheR_C"/>
</dbReference>
<dbReference type="InterPro" id="IPR000780">
    <property type="entry name" value="CheR_MeTrfase"/>
</dbReference>
<dbReference type="InterPro" id="IPR022641">
    <property type="entry name" value="CheR_N"/>
</dbReference>
<dbReference type="InterPro" id="IPR036804">
    <property type="entry name" value="CheR_N_sf"/>
</dbReference>
<dbReference type="InterPro" id="IPR029063">
    <property type="entry name" value="SAM-dependent_MTases_sf"/>
</dbReference>
<dbReference type="PANTHER" id="PTHR24422">
    <property type="entry name" value="CHEMOTAXIS PROTEIN METHYLTRANSFERASE"/>
    <property type="match status" value="1"/>
</dbReference>
<dbReference type="PANTHER" id="PTHR24422:SF21">
    <property type="entry name" value="CHEMOTAXIS PROTEIN METHYLTRANSFERASE 1"/>
    <property type="match status" value="1"/>
</dbReference>
<dbReference type="Pfam" id="PF01739">
    <property type="entry name" value="CheR"/>
    <property type="match status" value="1"/>
</dbReference>
<dbReference type="Pfam" id="PF03705">
    <property type="entry name" value="CheR_N"/>
    <property type="match status" value="1"/>
</dbReference>
<dbReference type="PIRSF" id="PIRSF000410">
    <property type="entry name" value="CheR"/>
    <property type="match status" value="1"/>
</dbReference>
<dbReference type="PRINTS" id="PR00996">
    <property type="entry name" value="CHERMTFRASE"/>
</dbReference>
<dbReference type="SMART" id="SM00138">
    <property type="entry name" value="MeTrc"/>
    <property type="match status" value="1"/>
</dbReference>
<dbReference type="SUPFAM" id="SSF47757">
    <property type="entry name" value="Chemotaxis receptor methyltransferase CheR, N-terminal domain"/>
    <property type="match status" value="1"/>
</dbReference>
<dbReference type="SUPFAM" id="SSF53335">
    <property type="entry name" value="S-adenosyl-L-methionine-dependent methyltransferases"/>
    <property type="match status" value="1"/>
</dbReference>
<dbReference type="PROSITE" id="PS50123">
    <property type="entry name" value="CHER"/>
    <property type="match status" value="1"/>
</dbReference>
<name>CHER1_PSEAE</name>
<gene>
    <name type="primary">cheR1</name>
    <name type="ordered locus">PA3348</name>
</gene>
<evidence type="ECO:0000250" key="1"/>
<evidence type="ECO:0000255" key="2">
    <source>
        <dbReference type="PROSITE-ProRule" id="PRU00051"/>
    </source>
</evidence>
<evidence type="ECO:0007829" key="3">
    <source>
        <dbReference type="PDB" id="5XLX"/>
    </source>
</evidence>
<evidence type="ECO:0007829" key="4">
    <source>
        <dbReference type="PDB" id="5XLY"/>
    </source>
</evidence>
<feature type="chain" id="PRO_0000176037" description="Chemotaxis protein methyltransferase 1">
    <location>
        <begin position="1"/>
        <end position="274"/>
    </location>
</feature>
<feature type="domain" description="CheR-type methyltransferase" evidence="2">
    <location>
        <begin position="1"/>
        <end position="274"/>
    </location>
</feature>
<feature type="binding site" evidence="1">
    <location>
        <position position="72"/>
    </location>
    <ligand>
        <name>S-adenosyl-L-methionine</name>
        <dbReference type="ChEBI" id="CHEBI:59789"/>
    </ligand>
</feature>
<feature type="binding site" evidence="1">
    <location>
        <position position="74"/>
    </location>
    <ligand>
        <name>S-adenosyl-L-methionine</name>
        <dbReference type="ChEBI" id="CHEBI:59789"/>
    </ligand>
</feature>
<feature type="binding site" evidence="1">
    <location>
        <position position="78"/>
    </location>
    <ligand>
        <name>S-adenosyl-L-methionine</name>
        <dbReference type="ChEBI" id="CHEBI:59789"/>
    </ligand>
</feature>
<feature type="binding site" evidence="1">
    <location>
        <position position="115"/>
    </location>
    <ligand>
        <name>S-adenosyl-L-methionine</name>
        <dbReference type="ChEBI" id="CHEBI:59789"/>
    </ligand>
</feature>
<feature type="binding site" evidence="1">
    <location>
        <position position="144"/>
    </location>
    <ligand>
        <name>S-adenosyl-L-methionine</name>
        <dbReference type="ChEBI" id="CHEBI:59789"/>
    </ligand>
</feature>
<feature type="binding site" evidence="1">
    <location>
        <begin position="200"/>
        <end position="201"/>
    </location>
    <ligand>
        <name>S-adenosyl-L-methionine</name>
        <dbReference type="ChEBI" id="CHEBI:59789"/>
    </ligand>
</feature>
<feature type="binding site" evidence="1">
    <location>
        <begin position="217"/>
        <end position="218"/>
    </location>
    <ligand>
        <name>S-adenosyl-L-methionine</name>
        <dbReference type="ChEBI" id="CHEBI:59789"/>
    </ligand>
</feature>
<feature type="helix" evidence="4">
    <location>
        <begin position="6"/>
        <end position="19"/>
    </location>
</feature>
<feature type="helix" evidence="4">
    <location>
        <begin position="28"/>
        <end position="42"/>
    </location>
</feature>
<feature type="helix" evidence="4">
    <location>
        <begin position="47"/>
        <end position="53"/>
    </location>
</feature>
<feature type="strand" evidence="4">
    <location>
        <begin position="58"/>
        <end position="60"/>
    </location>
</feature>
<feature type="helix" evidence="4">
    <location>
        <begin position="61"/>
        <end position="69"/>
    </location>
</feature>
<feature type="turn" evidence="4">
    <location>
        <begin position="76"/>
        <end position="79"/>
    </location>
</feature>
<feature type="helix" evidence="4">
    <location>
        <begin position="81"/>
        <end position="88"/>
    </location>
</feature>
<feature type="helix" evidence="4">
    <location>
        <begin position="90"/>
        <end position="95"/>
    </location>
</feature>
<feature type="strand" evidence="4">
    <location>
        <begin position="103"/>
        <end position="108"/>
    </location>
</feature>
<feature type="turn" evidence="3">
    <location>
        <begin position="111"/>
        <end position="113"/>
    </location>
</feature>
<feature type="helix" evidence="4">
    <location>
        <begin position="114"/>
        <end position="129"/>
    </location>
</feature>
<feature type="strand" evidence="4">
    <location>
        <begin position="138"/>
        <end position="144"/>
    </location>
</feature>
<feature type="helix" evidence="4">
    <location>
        <begin position="148"/>
        <end position="155"/>
    </location>
</feature>
<feature type="strand" evidence="4">
    <location>
        <begin position="157"/>
        <end position="159"/>
    </location>
</feature>
<feature type="helix" evidence="4">
    <location>
        <begin position="160"/>
        <end position="163"/>
    </location>
</feature>
<feature type="strand" evidence="4">
    <location>
        <begin position="164"/>
        <end position="166"/>
    </location>
</feature>
<feature type="helix" evidence="4">
    <location>
        <begin position="169"/>
        <end position="175"/>
    </location>
</feature>
<feature type="strand" evidence="4">
    <location>
        <begin position="176"/>
        <end position="178"/>
    </location>
</feature>
<feature type="strand" evidence="4">
    <location>
        <begin position="183"/>
        <end position="186"/>
    </location>
</feature>
<feature type="helix" evidence="4">
    <location>
        <begin position="188"/>
        <end position="192"/>
    </location>
</feature>
<feature type="strand" evidence="4">
    <location>
        <begin position="194"/>
        <end position="198"/>
    </location>
</feature>
<feature type="helix" evidence="4">
    <location>
        <begin position="206"/>
        <end position="208"/>
    </location>
</feature>
<feature type="strand" evidence="4">
    <location>
        <begin position="211"/>
        <end position="215"/>
    </location>
</feature>
<feature type="helix" evidence="4">
    <location>
        <begin position="220"/>
        <end position="222"/>
    </location>
</feature>
<feature type="helix" evidence="4">
    <location>
        <begin position="225"/>
        <end position="238"/>
    </location>
</feature>
<feature type="strand" evidence="4">
    <location>
        <begin position="239"/>
        <end position="246"/>
    </location>
</feature>
<feature type="turn" evidence="4">
    <location>
        <begin position="257"/>
        <end position="259"/>
    </location>
</feature>
<feature type="strand" evidence="4">
    <location>
        <begin position="260"/>
        <end position="264"/>
    </location>
</feature>
<feature type="strand" evidence="4">
    <location>
        <begin position="266"/>
        <end position="273"/>
    </location>
</feature>
<protein>
    <recommendedName>
        <fullName>Chemotaxis protein methyltransferase 1</fullName>
        <ecNumber>2.1.1.80</ecNumber>
    </recommendedName>
</protein>
<proteinExistence type="evidence at protein level"/>
<keyword id="KW-0002">3D-structure</keyword>
<keyword id="KW-0489">Methyltransferase</keyword>
<keyword id="KW-1185">Reference proteome</keyword>
<keyword id="KW-0949">S-adenosyl-L-methionine</keyword>
<keyword id="KW-0808">Transferase</keyword>
<comment type="function">
    <text evidence="1">Methylation of the membrane-bound methyl-accepting chemotaxis proteins (MCP) to form gamma-glutamyl methyl ester residues in MCP.</text>
</comment>
<comment type="catalytic activity">
    <reaction>
        <text>L-glutamyl-[protein] + S-adenosyl-L-methionine = [protein]-L-glutamate 5-O-methyl ester + S-adenosyl-L-homocysteine</text>
        <dbReference type="Rhea" id="RHEA:24452"/>
        <dbReference type="Rhea" id="RHEA-COMP:10208"/>
        <dbReference type="Rhea" id="RHEA-COMP:10311"/>
        <dbReference type="ChEBI" id="CHEBI:29973"/>
        <dbReference type="ChEBI" id="CHEBI:57856"/>
        <dbReference type="ChEBI" id="CHEBI:59789"/>
        <dbReference type="ChEBI" id="CHEBI:82795"/>
        <dbReference type="EC" id="2.1.1.80"/>
    </reaction>
</comment>
<organism>
    <name type="scientific">Pseudomonas aeruginosa (strain ATCC 15692 / DSM 22644 / CIP 104116 / JCM 14847 / LMG 12228 / 1C / PRS 101 / PAO1)</name>
    <dbReference type="NCBI Taxonomy" id="208964"/>
    <lineage>
        <taxon>Bacteria</taxon>
        <taxon>Pseudomonadati</taxon>
        <taxon>Pseudomonadota</taxon>
        <taxon>Gammaproteobacteria</taxon>
        <taxon>Pseudomonadales</taxon>
        <taxon>Pseudomonadaceae</taxon>
        <taxon>Pseudomonas</taxon>
    </lineage>
</organism>
<accession>O87131</accession>